<organism>
    <name type="scientific">Crocosphaera subtropica (strain ATCC 51142 / BH68)</name>
    <name type="common">Cyanothece sp. (strain ATCC 51142)</name>
    <dbReference type="NCBI Taxonomy" id="43989"/>
    <lineage>
        <taxon>Bacteria</taxon>
        <taxon>Bacillati</taxon>
        <taxon>Cyanobacteriota</taxon>
        <taxon>Cyanophyceae</taxon>
        <taxon>Oscillatoriophycideae</taxon>
        <taxon>Chroococcales</taxon>
        <taxon>Aphanothecaceae</taxon>
        <taxon>Crocosphaera</taxon>
        <taxon>Crocosphaera subtropica</taxon>
    </lineage>
</organism>
<gene>
    <name evidence="1" type="primary">petM</name>
    <name type="ordered locus">cce_2791</name>
</gene>
<reference key="1">
    <citation type="journal article" date="2008" name="Proc. Natl. Acad. Sci. U.S.A.">
        <title>The genome of Cyanothece 51142, a unicellular diazotrophic cyanobacterium important in the marine nitrogen cycle.</title>
        <authorList>
            <person name="Welsh E.A."/>
            <person name="Liberton M."/>
            <person name="Stoeckel J."/>
            <person name="Loh T."/>
            <person name="Elvitigala T."/>
            <person name="Wang C."/>
            <person name="Wollam A."/>
            <person name="Fulton R.S."/>
            <person name="Clifton S.W."/>
            <person name="Jacobs J.M."/>
            <person name="Aurora R."/>
            <person name="Ghosh B.K."/>
            <person name="Sherman L.A."/>
            <person name="Smith R.D."/>
            <person name="Wilson R.K."/>
            <person name="Pakrasi H.B."/>
        </authorList>
    </citation>
    <scope>NUCLEOTIDE SEQUENCE [LARGE SCALE GENOMIC DNA]</scope>
    <source>
        <strain>ATCC 51142 / BH68</strain>
    </source>
</reference>
<keyword id="KW-0249">Electron transport</keyword>
<keyword id="KW-0472">Membrane</keyword>
<keyword id="KW-0602">Photosynthesis</keyword>
<keyword id="KW-1185">Reference proteome</keyword>
<keyword id="KW-0793">Thylakoid</keyword>
<keyword id="KW-0812">Transmembrane</keyword>
<keyword id="KW-1133">Transmembrane helix</keyword>
<keyword id="KW-0813">Transport</keyword>
<comment type="function">
    <text evidence="1">Component of the cytochrome b6-f complex, which mediates electron transfer between photosystem II (PSII) and photosystem I (PSI), cyclic electron flow around PSI, and state transitions.</text>
</comment>
<comment type="subunit">
    <text evidence="1">The 4 large subunits of the cytochrome b6-f complex are cytochrome b6, subunit IV (17 kDa polypeptide, PetD), cytochrome f and the Rieske protein, while the 4 small subunits are PetG, PetL, PetM and PetN. The complex functions as a dimer.</text>
</comment>
<comment type="subcellular location">
    <subcellularLocation>
        <location evidence="1">Cellular thylakoid membrane</location>
        <topology evidence="1">Single-pass membrane protein</topology>
    </subcellularLocation>
</comment>
<comment type="similarity">
    <text evidence="1">Belongs to the PetM family.</text>
</comment>
<accession>B1WU77</accession>
<feature type="chain" id="PRO_1000192347" description="Cytochrome b6-f complex subunit 7">
    <location>
        <begin position="1"/>
        <end position="37"/>
    </location>
</feature>
<feature type="transmembrane region" description="Helical" evidence="1">
    <location>
        <begin position="11"/>
        <end position="29"/>
    </location>
</feature>
<name>PETM_CROS5</name>
<evidence type="ECO:0000255" key="1">
    <source>
        <dbReference type="HAMAP-Rule" id="MF_00396"/>
    </source>
</evidence>
<proteinExistence type="inferred from homology"/>
<dbReference type="EMBL" id="CP000806">
    <property type="protein sequence ID" value="ACB52139.1"/>
    <property type="molecule type" value="Genomic_DNA"/>
</dbReference>
<dbReference type="RefSeq" id="WP_009544526.1">
    <property type="nucleotide sequence ID" value="NC_010546.1"/>
</dbReference>
<dbReference type="SMR" id="B1WU77"/>
<dbReference type="STRING" id="43989.cce_2791"/>
<dbReference type="KEGG" id="cyt:cce_2791"/>
<dbReference type="eggNOG" id="ENOG5033D32">
    <property type="taxonomic scope" value="Bacteria"/>
</dbReference>
<dbReference type="HOGENOM" id="CLU_216743_0_0_3"/>
<dbReference type="OrthoDB" id="560408at2"/>
<dbReference type="Proteomes" id="UP000001203">
    <property type="component" value="Chromosome circular"/>
</dbReference>
<dbReference type="GO" id="GO:0009512">
    <property type="term" value="C:cytochrome b6f complex"/>
    <property type="evidence" value="ECO:0007669"/>
    <property type="project" value="InterPro"/>
</dbReference>
<dbReference type="GO" id="GO:0031676">
    <property type="term" value="C:plasma membrane-derived thylakoid membrane"/>
    <property type="evidence" value="ECO:0007669"/>
    <property type="project" value="UniProtKB-SubCell"/>
</dbReference>
<dbReference type="GO" id="GO:0009055">
    <property type="term" value="F:electron transfer activity"/>
    <property type="evidence" value="ECO:0007669"/>
    <property type="project" value="UniProtKB-UniRule"/>
</dbReference>
<dbReference type="GO" id="GO:0015979">
    <property type="term" value="P:photosynthesis"/>
    <property type="evidence" value="ECO:0007669"/>
    <property type="project" value="UniProtKB-KW"/>
</dbReference>
<dbReference type="HAMAP" id="MF_00396">
    <property type="entry name" value="Cytb6_f_PetM"/>
    <property type="match status" value="1"/>
</dbReference>
<dbReference type="InterPro" id="IPR012595">
    <property type="entry name" value="PetM_cyt_b6/f_cplx_su7"/>
</dbReference>
<dbReference type="Pfam" id="PF08041">
    <property type="entry name" value="PetM"/>
    <property type="match status" value="1"/>
</dbReference>
<protein>
    <recommendedName>
        <fullName evidence="1">Cytochrome b6-f complex subunit 7</fullName>
    </recommendedName>
    <alternativeName>
        <fullName evidence="1">Cytochrome b6-f complex subunit PetM</fullName>
    </alternativeName>
    <alternativeName>
        <fullName evidence="1">Cytochrome b6-f complex subunit VII</fullName>
    </alternativeName>
</protein>
<sequence>MTAESMMFNGAVILMVLVLFGLAWGFLILKIQGGEAE</sequence>